<dbReference type="EC" id="1.17.7.4" evidence="1"/>
<dbReference type="EMBL" id="BA000031">
    <property type="protein sequence ID" value="BAC58800.1"/>
    <property type="status" value="ALT_INIT"/>
    <property type="molecule type" value="Genomic_DNA"/>
</dbReference>
<dbReference type="RefSeq" id="NP_796916.2">
    <property type="nucleotide sequence ID" value="NC_004603.1"/>
</dbReference>
<dbReference type="SMR" id="Q87S87"/>
<dbReference type="KEGG" id="vpa:VP0537"/>
<dbReference type="PATRIC" id="fig|223926.6.peg.510"/>
<dbReference type="eggNOG" id="COG0761">
    <property type="taxonomic scope" value="Bacteria"/>
</dbReference>
<dbReference type="HOGENOM" id="CLU_027486_1_0_6"/>
<dbReference type="UniPathway" id="UPA00056">
    <property type="reaction ID" value="UER00097"/>
</dbReference>
<dbReference type="UniPathway" id="UPA00059">
    <property type="reaction ID" value="UER00105"/>
</dbReference>
<dbReference type="Proteomes" id="UP000002493">
    <property type="component" value="Chromosome 1"/>
</dbReference>
<dbReference type="GO" id="GO:0051539">
    <property type="term" value="F:4 iron, 4 sulfur cluster binding"/>
    <property type="evidence" value="ECO:0007669"/>
    <property type="project" value="UniProtKB-UniRule"/>
</dbReference>
<dbReference type="GO" id="GO:0051745">
    <property type="term" value="F:4-hydroxy-3-methylbut-2-enyl diphosphate reductase activity"/>
    <property type="evidence" value="ECO:0007669"/>
    <property type="project" value="UniProtKB-UniRule"/>
</dbReference>
<dbReference type="GO" id="GO:0046872">
    <property type="term" value="F:metal ion binding"/>
    <property type="evidence" value="ECO:0007669"/>
    <property type="project" value="UniProtKB-KW"/>
</dbReference>
<dbReference type="GO" id="GO:0050992">
    <property type="term" value="P:dimethylallyl diphosphate biosynthetic process"/>
    <property type="evidence" value="ECO:0007669"/>
    <property type="project" value="UniProtKB-UniRule"/>
</dbReference>
<dbReference type="GO" id="GO:0019288">
    <property type="term" value="P:isopentenyl diphosphate biosynthetic process, methylerythritol 4-phosphate pathway"/>
    <property type="evidence" value="ECO:0007669"/>
    <property type="project" value="UniProtKB-UniRule"/>
</dbReference>
<dbReference type="GO" id="GO:0016114">
    <property type="term" value="P:terpenoid biosynthetic process"/>
    <property type="evidence" value="ECO:0007669"/>
    <property type="project" value="UniProtKB-UniRule"/>
</dbReference>
<dbReference type="CDD" id="cd13944">
    <property type="entry name" value="lytB_ispH"/>
    <property type="match status" value="1"/>
</dbReference>
<dbReference type="FunFam" id="3.40.50.11270:FF:000001">
    <property type="entry name" value="4-hydroxy-3-methylbut-2-enyl diphosphate reductase"/>
    <property type="match status" value="1"/>
</dbReference>
<dbReference type="Gene3D" id="3.40.50.11270">
    <property type="match status" value="1"/>
</dbReference>
<dbReference type="Gene3D" id="3.40.1010.20">
    <property type="entry name" value="4-hydroxy-3-methylbut-2-enyl diphosphate reductase, catalytic domain"/>
    <property type="match status" value="2"/>
</dbReference>
<dbReference type="HAMAP" id="MF_00191">
    <property type="entry name" value="IspH"/>
    <property type="match status" value="1"/>
</dbReference>
<dbReference type="InterPro" id="IPR003451">
    <property type="entry name" value="LytB/IspH"/>
</dbReference>
<dbReference type="NCBIfam" id="TIGR00216">
    <property type="entry name" value="ispH_lytB"/>
    <property type="match status" value="1"/>
</dbReference>
<dbReference type="NCBIfam" id="NF002188">
    <property type="entry name" value="PRK01045.1-2"/>
    <property type="match status" value="1"/>
</dbReference>
<dbReference type="NCBIfam" id="NF002190">
    <property type="entry name" value="PRK01045.1-4"/>
    <property type="match status" value="1"/>
</dbReference>
<dbReference type="PANTHER" id="PTHR30426">
    <property type="entry name" value="4-HYDROXY-3-METHYLBUT-2-ENYL DIPHOSPHATE REDUCTASE"/>
    <property type="match status" value="1"/>
</dbReference>
<dbReference type="PANTHER" id="PTHR30426:SF0">
    <property type="entry name" value="4-HYDROXY-3-METHYLBUT-2-ENYL DIPHOSPHATE REDUCTASE"/>
    <property type="match status" value="1"/>
</dbReference>
<dbReference type="Pfam" id="PF02401">
    <property type="entry name" value="LYTB"/>
    <property type="match status" value="1"/>
</dbReference>
<feature type="chain" id="PRO_0000128891" description="4-hydroxy-3-methylbut-2-enyl diphosphate reductase">
    <location>
        <begin position="1"/>
        <end position="317"/>
    </location>
</feature>
<feature type="active site" description="Proton donor" evidence="1">
    <location>
        <position position="126"/>
    </location>
</feature>
<feature type="binding site" evidence="1">
    <location>
        <position position="12"/>
    </location>
    <ligand>
        <name>[4Fe-4S] cluster</name>
        <dbReference type="ChEBI" id="CHEBI:49883"/>
    </ligand>
</feature>
<feature type="binding site" evidence="1">
    <location>
        <position position="41"/>
    </location>
    <ligand>
        <name>(2E)-4-hydroxy-3-methylbut-2-enyl diphosphate</name>
        <dbReference type="ChEBI" id="CHEBI:128753"/>
    </ligand>
</feature>
<feature type="binding site" evidence="1">
    <location>
        <position position="41"/>
    </location>
    <ligand>
        <name>dimethylallyl diphosphate</name>
        <dbReference type="ChEBI" id="CHEBI:57623"/>
    </ligand>
</feature>
<feature type="binding site" evidence="1">
    <location>
        <position position="41"/>
    </location>
    <ligand>
        <name>isopentenyl diphosphate</name>
        <dbReference type="ChEBI" id="CHEBI:128769"/>
    </ligand>
</feature>
<feature type="binding site" evidence="1">
    <location>
        <position position="74"/>
    </location>
    <ligand>
        <name>(2E)-4-hydroxy-3-methylbut-2-enyl diphosphate</name>
        <dbReference type="ChEBI" id="CHEBI:128753"/>
    </ligand>
</feature>
<feature type="binding site" evidence="1">
    <location>
        <position position="74"/>
    </location>
    <ligand>
        <name>dimethylallyl diphosphate</name>
        <dbReference type="ChEBI" id="CHEBI:57623"/>
    </ligand>
</feature>
<feature type="binding site" evidence="1">
    <location>
        <position position="74"/>
    </location>
    <ligand>
        <name>isopentenyl diphosphate</name>
        <dbReference type="ChEBI" id="CHEBI:128769"/>
    </ligand>
</feature>
<feature type="binding site" evidence="1">
    <location>
        <position position="96"/>
    </location>
    <ligand>
        <name>[4Fe-4S] cluster</name>
        <dbReference type="ChEBI" id="CHEBI:49883"/>
    </ligand>
</feature>
<feature type="binding site" evidence="1">
    <location>
        <position position="124"/>
    </location>
    <ligand>
        <name>(2E)-4-hydroxy-3-methylbut-2-enyl diphosphate</name>
        <dbReference type="ChEBI" id="CHEBI:128753"/>
    </ligand>
</feature>
<feature type="binding site" evidence="1">
    <location>
        <position position="124"/>
    </location>
    <ligand>
        <name>dimethylallyl diphosphate</name>
        <dbReference type="ChEBI" id="CHEBI:57623"/>
    </ligand>
</feature>
<feature type="binding site" evidence="1">
    <location>
        <position position="124"/>
    </location>
    <ligand>
        <name>isopentenyl diphosphate</name>
        <dbReference type="ChEBI" id="CHEBI:128769"/>
    </ligand>
</feature>
<feature type="binding site" evidence="1">
    <location>
        <position position="169"/>
    </location>
    <ligand>
        <name>(2E)-4-hydroxy-3-methylbut-2-enyl diphosphate</name>
        <dbReference type="ChEBI" id="CHEBI:128753"/>
    </ligand>
</feature>
<feature type="binding site" evidence="1">
    <location>
        <position position="199"/>
    </location>
    <ligand>
        <name>[4Fe-4S] cluster</name>
        <dbReference type="ChEBI" id="CHEBI:49883"/>
    </ligand>
</feature>
<feature type="binding site" evidence="1">
    <location>
        <position position="227"/>
    </location>
    <ligand>
        <name>(2E)-4-hydroxy-3-methylbut-2-enyl diphosphate</name>
        <dbReference type="ChEBI" id="CHEBI:128753"/>
    </ligand>
</feature>
<feature type="binding site" evidence="1">
    <location>
        <position position="227"/>
    </location>
    <ligand>
        <name>dimethylallyl diphosphate</name>
        <dbReference type="ChEBI" id="CHEBI:57623"/>
    </ligand>
</feature>
<feature type="binding site" evidence="1">
    <location>
        <position position="227"/>
    </location>
    <ligand>
        <name>isopentenyl diphosphate</name>
        <dbReference type="ChEBI" id="CHEBI:128769"/>
    </ligand>
</feature>
<feature type="binding site" evidence="1">
    <location>
        <position position="228"/>
    </location>
    <ligand>
        <name>(2E)-4-hydroxy-3-methylbut-2-enyl diphosphate</name>
        <dbReference type="ChEBI" id="CHEBI:128753"/>
    </ligand>
</feature>
<feature type="binding site" evidence="1">
    <location>
        <position position="228"/>
    </location>
    <ligand>
        <name>dimethylallyl diphosphate</name>
        <dbReference type="ChEBI" id="CHEBI:57623"/>
    </ligand>
</feature>
<feature type="binding site" evidence="1">
    <location>
        <position position="228"/>
    </location>
    <ligand>
        <name>isopentenyl diphosphate</name>
        <dbReference type="ChEBI" id="CHEBI:128769"/>
    </ligand>
</feature>
<feature type="binding site" evidence="1">
    <location>
        <position position="229"/>
    </location>
    <ligand>
        <name>(2E)-4-hydroxy-3-methylbut-2-enyl diphosphate</name>
        <dbReference type="ChEBI" id="CHEBI:128753"/>
    </ligand>
</feature>
<feature type="binding site" evidence="1">
    <location>
        <position position="229"/>
    </location>
    <ligand>
        <name>dimethylallyl diphosphate</name>
        <dbReference type="ChEBI" id="CHEBI:57623"/>
    </ligand>
</feature>
<feature type="binding site" evidence="1">
    <location>
        <position position="229"/>
    </location>
    <ligand>
        <name>isopentenyl diphosphate</name>
        <dbReference type="ChEBI" id="CHEBI:128769"/>
    </ligand>
</feature>
<feature type="binding site" evidence="1">
    <location>
        <position position="271"/>
    </location>
    <ligand>
        <name>(2E)-4-hydroxy-3-methylbut-2-enyl diphosphate</name>
        <dbReference type="ChEBI" id="CHEBI:128753"/>
    </ligand>
</feature>
<feature type="binding site" evidence="1">
    <location>
        <position position="271"/>
    </location>
    <ligand>
        <name>dimethylallyl diphosphate</name>
        <dbReference type="ChEBI" id="CHEBI:57623"/>
    </ligand>
</feature>
<feature type="binding site" evidence="1">
    <location>
        <position position="271"/>
    </location>
    <ligand>
        <name>isopentenyl diphosphate</name>
        <dbReference type="ChEBI" id="CHEBI:128769"/>
    </ligand>
</feature>
<keyword id="KW-0004">4Fe-4S</keyword>
<keyword id="KW-0408">Iron</keyword>
<keyword id="KW-0411">Iron-sulfur</keyword>
<keyword id="KW-0414">Isoprene biosynthesis</keyword>
<keyword id="KW-0479">Metal-binding</keyword>
<keyword id="KW-0560">Oxidoreductase</keyword>
<reference key="1">
    <citation type="journal article" date="2003" name="Lancet">
        <title>Genome sequence of Vibrio parahaemolyticus: a pathogenic mechanism distinct from that of V. cholerae.</title>
        <authorList>
            <person name="Makino K."/>
            <person name="Oshima K."/>
            <person name="Kurokawa K."/>
            <person name="Yokoyama K."/>
            <person name="Uda T."/>
            <person name="Tagomori K."/>
            <person name="Iijima Y."/>
            <person name="Najima M."/>
            <person name="Nakano M."/>
            <person name="Yamashita A."/>
            <person name="Kubota Y."/>
            <person name="Kimura S."/>
            <person name="Yasunaga T."/>
            <person name="Honda T."/>
            <person name="Shinagawa H."/>
            <person name="Hattori M."/>
            <person name="Iida T."/>
        </authorList>
    </citation>
    <scope>NUCLEOTIDE SEQUENCE [LARGE SCALE GENOMIC DNA]</scope>
    <source>
        <strain>RIMD 2210633</strain>
    </source>
</reference>
<proteinExistence type="inferred from homology"/>
<gene>
    <name evidence="1" type="primary">ispH</name>
    <name type="synonym">lytB</name>
    <name type="ordered locus">VP0537</name>
</gene>
<accession>Q87S87</accession>
<comment type="function">
    <text evidence="1">Catalyzes the conversion of 1-hydroxy-2-methyl-2-(E)-butenyl 4-diphosphate (HMBPP) into a mixture of isopentenyl diphosphate (IPP) and dimethylallyl diphosphate (DMAPP). Acts in the terminal step of the DOXP/MEP pathway for isoprenoid precursor biosynthesis.</text>
</comment>
<comment type="catalytic activity">
    <reaction evidence="1">
        <text>isopentenyl diphosphate + 2 oxidized [2Fe-2S]-[ferredoxin] + H2O = (2E)-4-hydroxy-3-methylbut-2-enyl diphosphate + 2 reduced [2Fe-2S]-[ferredoxin] + 2 H(+)</text>
        <dbReference type="Rhea" id="RHEA:24488"/>
        <dbReference type="Rhea" id="RHEA-COMP:10000"/>
        <dbReference type="Rhea" id="RHEA-COMP:10001"/>
        <dbReference type="ChEBI" id="CHEBI:15377"/>
        <dbReference type="ChEBI" id="CHEBI:15378"/>
        <dbReference type="ChEBI" id="CHEBI:33737"/>
        <dbReference type="ChEBI" id="CHEBI:33738"/>
        <dbReference type="ChEBI" id="CHEBI:128753"/>
        <dbReference type="ChEBI" id="CHEBI:128769"/>
        <dbReference type="EC" id="1.17.7.4"/>
    </reaction>
</comment>
<comment type="catalytic activity">
    <reaction evidence="1">
        <text>dimethylallyl diphosphate + 2 oxidized [2Fe-2S]-[ferredoxin] + H2O = (2E)-4-hydroxy-3-methylbut-2-enyl diphosphate + 2 reduced [2Fe-2S]-[ferredoxin] + 2 H(+)</text>
        <dbReference type="Rhea" id="RHEA:24825"/>
        <dbReference type="Rhea" id="RHEA-COMP:10000"/>
        <dbReference type="Rhea" id="RHEA-COMP:10001"/>
        <dbReference type="ChEBI" id="CHEBI:15377"/>
        <dbReference type="ChEBI" id="CHEBI:15378"/>
        <dbReference type="ChEBI" id="CHEBI:33737"/>
        <dbReference type="ChEBI" id="CHEBI:33738"/>
        <dbReference type="ChEBI" id="CHEBI:57623"/>
        <dbReference type="ChEBI" id="CHEBI:128753"/>
        <dbReference type="EC" id="1.17.7.4"/>
    </reaction>
</comment>
<comment type="cofactor">
    <cofactor evidence="1">
        <name>[4Fe-4S] cluster</name>
        <dbReference type="ChEBI" id="CHEBI:49883"/>
    </cofactor>
    <text evidence="1">Binds 1 [4Fe-4S] cluster per subunit.</text>
</comment>
<comment type="pathway">
    <text evidence="1">Isoprenoid biosynthesis; dimethylallyl diphosphate biosynthesis; dimethylallyl diphosphate from (2E)-4-hydroxy-3-methylbutenyl diphosphate: step 1/1.</text>
</comment>
<comment type="pathway">
    <text evidence="1">Isoprenoid biosynthesis; isopentenyl diphosphate biosynthesis via DXP pathway; isopentenyl diphosphate from 1-deoxy-D-xylulose 5-phosphate: step 6/6.</text>
</comment>
<comment type="similarity">
    <text evidence="1">Belongs to the IspH family.</text>
</comment>
<comment type="sequence caution" evidence="2">
    <conflict type="erroneous initiation">
        <sequence resource="EMBL-CDS" id="BAC58800"/>
    </conflict>
</comment>
<protein>
    <recommendedName>
        <fullName evidence="1">4-hydroxy-3-methylbut-2-enyl diphosphate reductase</fullName>
        <shortName evidence="1">HMBPP reductase</shortName>
        <ecNumber evidence="1">1.17.7.4</ecNumber>
    </recommendedName>
</protein>
<name>ISPH_VIBPA</name>
<sequence>MKILLANPRGFCAGVDRAISIVERALELYQPPIYVRHEVVHNRFVVEGLKQRGAIFVEELHEVPDNNIVIFSAHGVSQAVRQEAKQRDLTVFDATCPLVTKVHMEVARASRRNMEVVLIGHAGHPEVEGTMGQYSSETGGMYLVETPADVEKLKAIVKDPSDLHYVSQTTLSVDETADVIEELRRVFPDIQGPRKDDICYATQNRQDAVRELAGDVDVMVVVGSKNSSNSTRLKELAEKLGTPGYLTDCPEDIKPEWFEGKTKVGVTAGASAPEELVNQILERIKELVGARSVDEVLGREENMFFEVPKELQIKQVD</sequence>
<evidence type="ECO:0000255" key="1">
    <source>
        <dbReference type="HAMAP-Rule" id="MF_00191"/>
    </source>
</evidence>
<evidence type="ECO:0000305" key="2"/>
<organism>
    <name type="scientific">Vibrio parahaemolyticus serotype O3:K6 (strain RIMD 2210633)</name>
    <dbReference type="NCBI Taxonomy" id="223926"/>
    <lineage>
        <taxon>Bacteria</taxon>
        <taxon>Pseudomonadati</taxon>
        <taxon>Pseudomonadota</taxon>
        <taxon>Gammaproteobacteria</taxon>
        <taxon>Vibrionales</taxon>
        <taxon>Vibrionaceae</taxon>
        <taxon>Vibrio</taxon>
    </lineage>
</organism>